<feature type="chain" id="PRO_0000244876" description="Gap junction gamma-2 protein">
    <location>
        <begin position="1"/>
        <end position="429"/>
    </location>
</feature>
<feature type="topological domain" description="Cytoplasmic" evidence="3">
    <location>
        <begin position="1"/>
        <end position="25"/>
    </location>
</feature>
<feature type="transmembrane region" description="Helical" evidence="3">
    <location>
        <begin position="26"/>
        <end position="46"/>
    </location>
</feature>
<feature type="topological domain" description="Extracellular" evidence="3">
    <location>
        <begin position="47"/>
        <end position="78"/>
    </location>
</feature>
<feature type="transmembrane region" description="Helical" evidence="3">
    <location>
        <begin position="79"/>
        <end position="99"/>
    </location>
</feature>
<feature type="topological domain" description="Cytoplasmic" evidence="3">
    <location>
        <begin position="100"/>
        <end position="214"/>
    </location>
</feature>
<feature type="transmembrane region" description="Helical" evidence="3">
    <location>
        <begin position="215"/>
        <end position="235"/>
    </location>
</feature>
<feature type="topological domain" description="Extracellular" evidence="3">
    <location>
        <begin position="236"/>
        <end position="263"/>
    </location>
</feature>
<feature type="transmembrane region" description="Helical" evidence="3">
    <location>
        <begin position="264"/>
        <end position="284"/>
    </location>
</feature>
<feature type="topological domain" description="Cytoplasmic" evidence="3">
    <location>
        <begin position="285"/>
        <end position="429"/>
    </location>
</feature>
<feature type="region of interest" description="Disordered" evidence="4">
    <location>
        <begin position="106"/>
        <end position="200"/>
    </location>
</feature>
<feature type="region of interest" description="Disordered" evidence="4">
    <location>
        <begin position="296"/>
        <end position="316"/>
    </location>
</feature>
<feature type="region of interest" description="Disordered" evidence="4">
    <location>
        <begin position="361"/>
        <end position="429"/>
    </location>
</feature>
<feature type="compositionally biased region" description="Basic residues" evidence="4">
    <location>
        <begin position="112"/>
        <end position="123"/>
    </location>
</feature>
<feature type="compositionally biased region" description="Pro residues" evidence="4">
    <location>
        <begin position="124"/>
        <end position="138"/>
    </location>
</feature>
<feature type="compositionally biased region" description="Acidic residues" evidence="4">
    <location>
        <begin position="142"/>
        <end position="173"/>
    </location>
</feature>
<feature type="compositionally biased region" description="Pro residues" evidence="4">
    <location>
        <begin position="303"/>
        <end position="316"/>
    </location>
</feature>
<feature type="compositionally biased region" description="Low complexity" evidence="4">
    <location>
        <begin position="372"/>
        <end position="395"/>
    </location>
</feature>
<feature type="modified residue" description="Phosphoserine" evidence="2">
    <location>
        <position position="366"/>
    </location>
</feature>
<protein>
    <recommendedName>
        <fullName>Gap junction gamma-2 protein</fullName>
    </recommendedName>
    <alternativeName>
        <fullName>Gap junction alpha-12 protein</fullName>
    </alternativeName>
</protein>
<gene>
    <name type="primary">GJC2</name>
    <name type="synonym">GJA12</name>
</gene>
<comment type="function">
    <text evidence="1">One gap junction consists of a cluster of closely packed pairs of transmembrane channels, the connexons, through which materials of low MW diffuse from one cell to a neighboring cell. May play a role in myelination in central and peripheral nervous systems (By similarity).</text>
</comment>
<comment type="subunit">
    <text evidence="1">A connexon is composed of a hexamer of connexins. Interacts with TJP1 (By similarity).</text>
</comment>
<comment type="subcellular location">
    <subcellularLocation>
        <location evidence="1">Cell membrane</location>
        <topology evidence="1">Multi-pass membrane protein</topology>
    </subcellularLocation>
    <subcellularLocation>
        <location evidence="1">Cell junction</location>
        <location evidence="1">Gap junction</location>
    </subcellularLocation>
</comment>
<comment type="similarity">
    <text evidence="5">Belongs to the connexin family. Gamma-type subfamily.</text>
</comment>
<name>CXG2_BOVIN</name>
<organism>
    <name type="scientific">Bos taurus</name>
    <name type="common">Bovine</name>
    <dbReference type="NCBI Taxonomy" id="9913"/>
    <lineage>
        <taxon>Eukaryota</taxon>
        <taxon>Metazoa</taxon>
        <taxon>Chordata</taxon>
        <taxon>Craniata</taxon>
        <taxon>Vertebrata</taxon>
        <taxon>Euteleostomi</taxon>
        <taxon>Mammalia</taxon>
        <taxon>Eutheria</taxon>
        <taxon>Laurasiatheria</taxon>
        <taxon>Artiodactyla</taxon>
        <taxon>Ruminantia</taxon>
        <taxon>Pecora</taxon>
        <taxon>Bovidae</taxon>
        <taxon>Bovinae</taxon>
        <taxon>Bos</taxon>
    </lineage>
</organism>
<keyword id="KW-0965">Cell junction</keyword>
<keyword id="KW-1003">Cell membrane</keyword>
<keyword id="KW-0303">Gap junction</keyword>
<keyword id="KW-0472">Membrane</keyword>
<keyword id="KW-0597">Phosphoprotein</keyword>
<keyword id="KW-1185">Reference proteome</keyword>
<keyword id="KW-0812">Transmembrane</keyword>
<keyword id="KW-1133">Transmembrane helix</keyword>
<evidence type="ECO:0000250" key="1"/>
<evidence type="ECO:0000250" key="2">
    <source>
        <dbReference type="UniProtKB" id="Q8BQU6"/>
    </source>
</evidence>
<evidence type="ECO:0000255" key="3"/>
<evidence type="ECO:0000256" key="4">
    <source>
        <dbReference type="SAM" id="MobiDB-lite"/>
    </source>
</evidence>
<evidence type="ECO:0000305" key="5"/>
<sequence>MTNMSWSFLTRLLEEIHNHSTFVGKVWLTVLVVFRIVLTAVGGESIYSDEQTKFTCNTRQPGCDNVCYDAFAPLSHVRFWVFQIVVISTPSVMYLGYAVHRLARASQDERRRASRRRPSRRAPRPPLPLPPPPHPGWPEPADLGEEEPMLGLGEEDEDPGVAEGLGEDEEAEDTGAAKGAGGDTKVAGVPGPAGQHDGRRRIQREGLMRVYVAQLVARAAFEVAFLVGQYLLYGFEVRPFFACSRQPCPHVVDCFVSRPTEKTVFLLVMYVVSCLCLLLNLCEMAHLGLGNAQDAVRGRRPLPASPGPMPRPPPCALPAAPSGLACPPDYSLVVRTAEHARAQDQELASLALQALQDRRALGDLDSPPGPGLPANARGPPKPGAPASGSGSATSGGTVGGQGRQGIKPRMGSEKGSGSSSREGKTTVWI</sequence>
<accession>Q29RK8</accession>
<proteinExistence type="evidence at transcript level"/>
<reference key="1">
    <citation type="submission" date="2006-02" db="EMBL/GenBank/DDBJ databases">
        <authorList>
            <consortium name="NIH - Mammalian Gene Collection (MGC) project"/>
        </authorList>
    </citation>
    <scope>NUCLEOTIDE SEQUENCE [LARGE SCALE MRNA]</scope>
    <source>
        <strain>Hereford</strain>
        <tissue>Hypothalamus</tissue>
    </source>
</reference>
<dbReference type="EMBL" id="BC114129">
    <property type="protein sequence ID" value="AAI14130.1"/>
    <property type="molecule type" value="mRNA"/>
</dbReference>
<dbReference type="RefSeq" id="NP_001039905.1">
    <property type="nucleotide sequence ID" value="NM_001046440.1"/>
</dbReference>
<dbReference type="RefSeq" id="XP_005208463.2">
    <property type="nucleotide sequence ID" value="XM_005208406.5"/>
</dbReference>
<dbReference type="RefSeq" id="XP_005208464.2">
    <property type="nucleotide sequence ID" value="XM_005208407.5"/>
</dbReference>
<dbReference type="SMR" id="Q29RK8"/>
<dbReference type="FunCoup" id="Q29RK8">
    <property type="interactions" value="172"/>
</dbReference>
<dbReference type="STRING" id="9913.ENSBTAP00000019857"/>
<dbReference type="PaxDb" id="9913-ENSBTAP00000019857"/>
<dbReference type="Ensembl" id="ENSBTAT00000019857.6">
    <property type="protein sequence ID" value="ENSBTAP00000019857.6"/>
    <property type="gene ID" value="ENSBTAG00000014916.6"/>
</dbReference>
<dbReference type="GeneID" id="538745"/>
<dbReference type="KEGG" id="bta:538745"/>
<dbReference type="CTD" id="57165"/>
<dbReference type="VEuPathDB" id="HostDB:ENSBTAG00000014916"/>
<dbReference type="VGNC" id="VGNC:29383">
    <property type="gene designation" value="GJC2"/>
</dbReference>
<dbReference type="eggNOG" id="ENOG502QV2G">
    <property type="taxonomic scope" value="Eukaryota"/>
</dbReference>
<dbReference type="GeneTree" id="ENSGT01130000278276"/>
<dbReference type="InParanoid" id="Q29RK8"/>
<dbReference type="OMA" id="ACTKGAG"/>
<dbReference type="OrthoDB" id="10061722at2759"/>
<dbReference type="Reactome" id="R-BTA-190861">
    <property type="pathway name" value="Gap junction assembly"/>
</dbReference>
<dbReference type="Proteomes" id="UP000009136">
    <property type="component" value="Chromosome 7"/>
</dbReference>
<dbReference type="Bgee" id="ENSBTAG00000014916">
    <property type="expression patterns" value="Expressed in pons and 68 other cell types or tissues"/>
</dbReference>
<dbReference type="GO" id="GO:0005922">
    <property type="term" value="C:connexin complex"/>
    <property type="evidence" value="ECO:0000318"/>
    <property type="project" value="GO_Central"/>
</dbReference>
<dbReference type="GO" id="GO:0043209">
    <property type="term" value="C:myelin sheath"/>
    <property type="evidence" value="ECO:0007669"/>
    <property type="project" value="Ensembl"/>
</dbReference>
<dbReference type="GO" id="GO:0005243">
    <property type="term" value="F:gap junction channel activity"/>
    <property type="evidence" value="ECO:0000318"/>
    <property type="project" value="GO_Central"/>
</dbReference>
<dbReference type="GO" id="GO:1903763">
    <property type="term" value="F:gap junction channel activity involved in cell communication by electrical coupling"/>
    <property type="evidence" value="ECO:0007669"/>
    <property type="project" value="Ensembl"/>
</dbReference>
<dbReference type="GO" id="GO:0007267">
    <property type="term" value="P:cell-cell signaling"/>
    <property type="evidence" value="ECO:0000318"/>
    <property type="project" value="GO_Central"/>
</dbReference>
<dbReference type="GO" id="GO:0009636">
    <property type="term" value="P:response to toxic substance"/>
    <property type="evidence" value="ECO:0007669"/>
    <property type="project" value="Ensembl"/>
</dbReference>
<dbReference type="Gene3D" id="1.20.1440.80">
    <property type="entry name" value="Gap junction channel protein cysteine-rich domain"/>
    <property type="match status" value="1"/>
</dbReference>
<dbReference type="InterPro" id="IPR000500">
    <property type="entry name" value="Connexin"/>
</dbReference>
<dbReference type="InterPro" id="IPR019570">
    <property type="entry name" value="Connexin_CCC"/>
</dbReference>
<dbReference type="InterPro" id="IPR017990">
    <property type="entry name" value="Connexin_CS"/>
</dbReference>
<dbReference type="InterPro" id="IPR013092">
    <property type="entry name" value="Connexin_N"/>
</dbReference>
<dbReference type="InterPro" id="IPR038359">
    <property type="entry name" value="Connexin_N_sf"/>
</dbReference>
<dbReference type="PANTHER" id="PTHR11984">
    <property type="entry name" value="CONNEXIN"/>
    <property type="match status" value="1"/>
</dbReference>
<dbReference type="PANTHER" id="PTHR11984:SF52">
    <property type="entry name" value="GAP JUNCTION GAMMA-2 PROTEIN"/>
    <property type="match status" value="1"/>
</dbReference>
<dbReference type="Pfam" id="PF00029">
    <property type="entry name" value="Connexin"/>
    <property type="match status" value="1"/>
</dbReference>
<dbReference type="PRINTS" id="PR00206">
    <property type="entry name" value="CONNEXIN"/>
</dbReference>
<dbReference type="SMART" id="SM00037">
    <property type="entry name" value="CNX"/>
    <property type="match status" value="1"/>
</dbReference>
<dbReference type="SMART" id="SM01089">
    <property type="entry name" value="Connexin_CCC"/>
    <property type="match status" value="1"/>
</dbReference>
<dbReference type="PROSITE" id="PS00407">
    <property type="entry name" value="CONNEXINS_1"/>
    <property type="match status" value="1"/>
</dbReference>
<dbReference type="PROSITE" id="PS00408">
    <property type="entry name" value="CONNEXINS_2"/>
    <property type="match status" value="1"/>
</dbReference>